<protein>
    <recommendedName>
        <fullName evidence="1">Phosphatidylserine decarboxylase proenzyme</fullName>
        <ecNumber evidence="1">4.1.1.65</ecNumber>
    </recommendedName>
    <component>
        <recommendedName>
            <fullName evidence="1">Phosphatidylserine decarboxylase alpha chain</fullName>
        </recommendedName>
    </component>
    <component>
        <recommendedName>
            <fullName evidence="1">Phosphatidylserine decarboxylase beta chain</fullName>
        </recommendedName>
    </component>
</protein>
<organism>
    <name type="scientific">Mycolicibacterium gilvum (strain PYR-GCK)</name>
    <name type="common">Mycobacterium gilvum (strain PYR-GCK)</name>
    <dbReference type="NCBI Taxonomy" id="350054"/>
    <lineage>
        <taxon>Bacteria</taxon>
        <taxon>Bacillati</taxon>
        <taxon>Actinomycetota</taxon>
        <taxon>Actinomycetes</taxon>
        <taxon>Mycobacteriales</taxon>
        <taxon>Mycobacteriaceae</taxon>
        <taxon>Mycolicibacterium</taxon>
    </lineage>
</organism>
<feature type="chain" id="PRO_1000082926" description="Phosphatidylserine decarboxylase beta chain" evidence="1">
    <location>
        <begin position="1"/>
        <end position="200"/>
    </location>
</feature>
<feature type="chain" id="PRO_1000082927" description="Phosphatidylserine decarboxylase alpha chain" evidence="1">
    <location>
        <begin position="201"/>
        <end position="232"/>
    </location>
</feature>
<feature type="active site" description="Schiff-base intermediate with substrate; via pyruvic acid" evidence="1">
    <location>
        <position position="201"/>
    </location>
</feature>
<feature type="site" description="Cleavage (non-hydrolytic); by autocatalysis" evidence="1">
    <location>
        <begin position="200"/>
        <end position="201"/>
    </location>
</feature>
<feature type="modified residue" description="Pyruvic acid (Ser); by autocatalysis" evidence="1">
    <location>
        <position position="201"/>
    </location>
</feature>
<name>PSD_MYCGI</name>
<reference key="1">
    <citation type="submission" date="2007-04" db="EMBL/GenBank/DDBJ databases">
        <title>Complete sequence of chromosome of Mycobacterium gilvum PYR-GCK.</title>
        <authorList>
            <consortium name="US DOE Joint Genome Institute"/>
            <person name="Copeland A."/>
            <person name="Lucas S."/>
            <person name="Lapidus A."/>
            <person name="Barry K."/>
            <person name="Detter J.C."/>
            <person name="Glavina del Rio T."/>
            <person name="Hammon N."/>
            <person name="Israni S."/>
            <person name="Dalin E."/>
            <person name="Tice H."/>
            <person name="Pitluck S."/>
            <person name="Chain P."/>
            <person name="Malfatti S."/>
            <person name="Shin M."/>
            <person name="Vergez L."/>
            <person name="Schmutz J."/>
            <person name="Larimer F."/>
            <person name="Land M."/>
            <person name="Hauser L."/>
            <person name="Kyrpides N."/>
            <person name="Mikhailova N."/>
            <person name="Miller C."/>
            <person name="Richardson P."/>
        </authorList>
    </citation>
    <scope>NUCLEOTIDE SEQUENCE [LARGE SCALE GENOMIC DNA]</scope>
    <source>
        <strain>PYR-GCK</strain>
    </source>
</reference>
<proteinExistence type="inferred from homology"/>
<sequence length="232" mass="24271">MARRPDLKTGPERLAALVRTTVPPMHPAGLPFVGASLAVALAGRKSRWLRNAGVASAAANAAFFRHPPRTPPTRPGVVVAPADGLICLIEDELPPAELELPAVPLPRISIFLSLFDAHVQRAPLAGEVVAVEHRPGLFGSAELAAASADNERNSVVIRSPEGAEVIAVQIAGLLARRIVCNVKSGDKVGLGDTYGLIRYGSRLDTYLPAGSDVLVEVGQRAVAGETVLAELP</sequence>
<keyword id="KW-1003">Cell membrane</keyword>
<keyword id="KW-0210">Decarboxylase</keyword>
<keyword id="KW-0444">Lipid biosynthesis</keyword>
<keyword id="KW-0443">Lipid metabolism</keyword>
<keyword id="KW-0456">Lyase</keyword>
<keyword id="KW-0472">Membrane</keyword>
<keyword id="KW-0594">Phospholipid biosynthesis</keyword>
<keyword id="KW-1208">Phospholipid metabolism</keyword>
<keyword id="KW-0670">Pyruvate</keyword>
<keyword id="KW-0865">Zymogen</keyword>
<dbReference type="EC" id="4.1.1.65" evidence="1"/>
<dbReference type="EMBL" id="CP000656">
    <property type="protein sequence ID" value="ABP42648.1"/>
    <property type="molecule type" value="Genomic_DNA"/>
</dbReference>
<dbReference type="SMR" id="A4T2V6"/>
<dbReference type="STRING" id="350054.Mflv_0153"/>
<dbReference type="KEGG" id="mgi:Mflv_0153"/>
<dbReference type="eggNOG" id="COG0688">
    <property type="taxonomic scope" value="Bacteria"/>
</dbReference>
<dbReference type="HOGENOM" id="CLU_072492_0_0_11"/>
<dbReference type="OrthoDB" id="9790893at2"/>
<dbReference type="UniPathway" id="UPA00558">
    <property type="reaction ID" value="UER00616"/>
</dbReference>
<dbReference type="GO" id="GO:0005886">
    <property type="term" value="C:plasma membrane"/>
    <property type="evidence" value="ECO:0007669"/>
    <property type="project" value="UniProtKB-SubCell"/>
</dbReference>
<dbReference type="GO" id="GO:0004609">
    <property type="term" value="F:phosphatidylserine decarboxylase activity"/>
    <property type="evidence" value="ECO:0007669"/>
    <property type="project" value="UniProtKB-UniRule"/>
</dbReference>
<dbReference type="GO" id="GO:0006646">
    <property type="term" value="P:phosphatidylethanolamine biosynthetic process"/>
    <property type="evidence" value="ECO:0007669"/>
    <property type="project" value="UniProtKB-UniRule"/>
</dbReference>
<dbReference type="HAMAP" id="MF_00664">
    <property type="entry name" value="PS_decarb_PSD_A"/>
    <property type="match status" value="1"/>
</dbReference>
<dbReference type="InterPro" id="IPR003817">
    <property type="entry name" value="PS_Dcarbxylase"/>
</dbReference>
<dbReference type="InterPro" id="IPR033175">
    <property type="entry name" value="PSD-A"/>
</dbReference>
<dbReference type="NCBIfam" id="NF003679">
    <property type="entry name" value="PRK05305.1-3"/>
    <property type="match status" value="1"/>
</dbReference>
<dbReference type="PANTHER" id="PTHR35809">
    <property type="entry name" value="ARCHAETIDYLSERINE DECARBOXYLASE PROENZYME-RELATED"/>
    <property type="match status" value="1"/>
</dbReference>
<dbReference type="PANTHER" id="PTHR35809:SF1">
    <property type="entry name" value="ARCHAETIDYLSERINE DECARBOXYLASE PROENZYME-RELATED"/>
    <property type="match status" value="1"/>
</dbReference>
<dbReference type="Pfam" id="PF02666">
    <property type="entry name" value="PS_Dcarbxylase"/>
    <property type="match status" value="1"/>
</dbReference>
<accession>A4T2V6</accession>
<comment type="function">
    <text evidence="1">Catalyzes the formation of phosphatidylethanolamine (PtdEtn) from phosphatidylserine (PtdSer).</text>
</comment>
<comment type="catalytic activity">
    <reaction evidence="1">
        <text>a 1,2-diacyl-sn-glycero-3-phospho-L-serine + H(+) = a 1,2-diacyl-sn-glycero-3-phosphoethanolamine + CO2</text>
        <dbReference type="Rhea" id="RHEA:20828"/>
        <dbReference type="ChEBI" id="CHEBI:15378"/>
        <dbReference type="ChEBI" id="CHEBI:16526"/>
        <dbReference type="ChEBI" id="CHEBI:57262"/>
        <dbReference type="ChEBI" id="CHEBI:64612"/>
        <dbReference type="EC" id="4.1.1.65"/>
    </reaction>
</comment>
<comment type="cofactor">
    <cofactor evidence="1">
        <name>pyruvate</name>
        <dbReference type="ChEBI" id="CHEBI:15361"/>
    </cofactor>
    <text evidence="1">Binds 1 pyruvoyl group covalently per subunit.</text>
</comment>
<comment type="pathway">
    <text evidence="1">Phospholipid metabolism; phosphatidylethanolamine biosynthesis; phosphatidylethanolamine from CDP-diacylglycerol: step 2/2.</text>
</comment>
<comment type="subunit">
    <text evidence="1">Heterodimer of a large membrane-associated beta subunit and a small pyruvoyl-containing alpha subunit.</text>
</comment>
<comment type="subcellular location">
    <subcellularLocation>
        <location evidence="1">Cell membrane</location>
        <topology evidence="1">Peripheral membrane protein</topology>
    </subcellularLocation>
</comment>
<comment type="PTM">
    <text evidence="1">Is synthesized initially as an inactive proenzyme. Formation of the active enzyme involves a self-maturation process in which the active site pyruvoyl group is generated from an internal serine residue via an autocatalytic post-translational modification. Two non-identical subunits are generated from the proenzyme in this reaction, and the pyruvate is formed at the N-terminus of the alpha chain, which is derived from the carboxyl end of the proenzyme. The post-translation cleavage follows an unusual pathway, termed non-hydrolytic serinolysis, in which the side chain hydroxyl group of the serine supplies its oxygen atom to form the C-terminus of the beta chain, while the remainder of the serine residue undergoes an oxidative deamination to produce ammonia and the pyruvoyl prosthetic group on the alpha chain.</text>
</comment>
<comment type="similarity">
    <text evidence="1">Belongs to the phosphatidylserine decarboxylase family. PSD-A subfamily.</text>
</comment>
<evidence type="ECO:0000255" key="1">
    <source>
        <dbReference type="HAMAP-Rule" id="MF_00664"/>
    </source>
</evidence>
<gene>
    <name evidence="1" type="primary">psd</name>
    <name type="ordered locus">Mflv_0153</name>
</gene>